<accession>Q3AD49</accession>
<keyword id="KW-0028">Amino-acid biosynthesis</keyword>
<keyword id="KW-0963">Cytoplasm</keyword>
<keyword id="KW-0368">Histidine biosynthesis</keyword>
<keyword id="KW-0413">Isomerase</keyword>
<keyword id="KW-1185">Reference proteome</keyword>
<gene>
    <name evidence="1" type="primary">hisA</name>
    <name type="ordered locus">CHY_1089</name>
</gene>
<evidence type="ECO:0000255" key="1">
    <source>
        <dbReference type="HAMAP-Rule" id="MF_01014"/>
    </source>
</evidence>
<dbReference type="EC" id="5.3.1.16" evidence="1"/>
<dbReference type="EMBL" id="CP000141">
    <property type="protein sequence ID" value="ABB14951.1"/>
    <property type="molecule type" value="Genomic_DNA"/>
</dbReference>
<dbReference type="RefSeq" id="WP_011344011.1">
    <property type="nucleotide sequence ID" value="NC_007503.1"/>
</dbReference>
<dbReference type="SMR" id="Q3AD49"/>
<dbReference type="FunCoup" id="Q3AD49">
    <property type="interactions" value="321"/>
</dbReference>
<dbReference type="STRING" id="246194.CHY_1089"/>
<dbReference type="KEGG" id="chy:CHY_1089"/>
<dbReference type="eggNOG" id="COG0106">
    <property type="taxonomic scope" value="Bacteria"/>
</dbReference>
<dbReference type="HOGENOM" id="CLU_048577_1_1_9"/>
<dbReference type="InParanoid" id="Q3AD49"/>
<dbReference type="OrthoDB" id="9807749at2"/>
<dbReference type="UniPathway" id="UPA00031">
    <property type="reaction ID" value="UER00009"/>
</dbReference>
<dbReference type="Proteomes" id="UP000002706">
    <property type="component" value="Chromosome"/>
</dbReference>
<dbReference type="GO" id="GO:0005737">
    <property type="term" value="C:cytoplasm"/>
    <property type="evidence" value="ECO:0007669"/>
    <property type="project" value="UniProtKB-SubCell"/>
</dbReference>
<dbReference type="GO" id="GO:0003949">
    <property type="term" value="F:1-(5-phosphoribosyl)-5-[(5-phosphoribosylamino)methylideneamino]imidazole-4-carboxamide isomerase activity"/>
    <property type="evidence" value="ECO:0007669"/>
    <property type="project" value="UniProtKB-UniRule"/>
</dbReference>
<dbReference type="GO" id="GO:0000105">
    <property type="term" value="P:L-histidine biosynthetic process"/>
    <property type="evidence" value="ECO:0007669"/>
    <property type="project" value="UniProtKB-UniRule"/>
</dbReference>
<dbReference type="GO" id="GO:0000162">
    <property type="term" value="P:L-tryptophan biosynthetic process"/>
    <property type="evidence" value="ECO:0007669"/>
    <property type="project" value="TreeGrafter"/>
</dbReference>
<dbReference type="CDD" id="cd04732">
    <property type="entry name" value="HisA"/>
    <property type="match status" value="1"/>
</dbReference>
<dbReference type="FunFam" id="3.20.20.70:FF:000009">
    <property type="entry name" value="1-(5-phosphoribosyl)-5-[(5-phosphoribosylamino)methylideneamino] imidazole-4-carboxamide isomerase"/>
    <property type="match status" value="1"/>
</dbReference>
<dbReference type="Gene3D" id="3.20.20.70">
    <property type="entry name" value="Aldolase class I"/>
    <property type="match status" value="1"/>
</dbReference>
<dbReference type="HAMAP" id="MF_01014">
    <property type="entry name" value="HisA"/>
    <property type="match status" value="1"/>
</dbReference>
<dbReference type="InterPro" id="IPR013785">
    <property type="entry name" value="Aldolase_TIM"/>
</dbReference>
<dbReference type="InterPro" id="IPR006062">
    <property type="entry name" value="His_biosynth"/>
</dbReference>
<dbReference type="InterPro" id="IPR006063">
    <property type="entry name" value="HisA_bact_arch"/>
</dbReference>
<dbReference type="InterPro" id="IPR044524">
    <property type="entry name" value="Isoase_HisA-like"/>
</dbReference>
<dbReference type="InterPro" id="IPR023016">
    <property type="entry name" value="Isoase_HisA-like_bact"/>
</dbReference>
<dbReference type="InterPro" id="IPR011060">
    <property type="entry name" value="RibuloseP-bd_barrel"/>
</dbReference>
<dbReference type="NCBIfam" id="TIGR00007">
    <property type="entry name" value="1-(5-phosphoribosyl)-5-[(5-phosphoribosylamino)methylideneamino]imidazole-4-carboxamide isomerase"/>
    <property type="match status" value="1"/>
</dbReference>
<dbReference type="PANTHER" id="PTHR43090">
    <property type="entry name" value="1-(5-PHOSPHORIBOSYL)-5-[(5-PHOSPHORIBOSYLAMINO)METHYLIDENEAMINO] IMIDAZOLE-4-CARBOXAMIDE ISOMERASE"/>
    <property type="match status" value="1"/>
</dbReference>
<dbReference type="PANTHER" id="PTHR43090:SF2">
    <property type="entry name" value="1-(5-PHOSPHORIBOSYL)-5-[(5-PHOSPHORIBOSYLAMINO)METHYLIDENEAMINO] IMIDAZOLE-4-CARBOXAMIDE ISOMERASE"/>
    <property type="match status" value="1"/>
</dbReference>
<dbReference type="Pfam" id="PF00977">
    <property type="entry name" value="His_biosynth"/>
    <property type="match status" value="1"/>
</dbReference>
<dbReference type="SUPFAM" id="SSF51366">
    <property type="entry name" value="Ribulose-phoshate binding barrel"/>
    <property type="match status" value="1"/>
</dbReference>
<protein>
    <recommendedName>
        <fullName evidence="1">1-(5-phosphoribosyl)-5-[(5-phosphoribosylamino)methylideneamino] imidazole-4-carboxamide isomerase</fullName>
        <ecNumber evidence="1">5.3.1.16</ecNumber>
    </recommendedName>
    <alternativeName>
        <fullName evidence="1">Phosphoribosylformimino-5-aminoimidazole carboxamide ribotide isomerase</fullName>
    </alternativeName>
</protein>
<reference key="1">
    <citation type="journal article" date="2005" name="PLoS Genet.">
        <title>Life in hot carbon monoxide: the complete genome sequence of Carboxydothermus hydrogenoformans Z-2901.</title>
        <authorList>
            <person name="Wu M."/>
            <person name="Ren Q."/>
            <person name="Durkin A.S."/>
            <person name="Daugherty S.C."/>
            <person name="Brinkac L.M."/>
            <person name="Dodson R.J."/>
            <person name="Madupu R."/>
            <person name="Sullivan S.A."/>
            <person name="Kolonay J.F."/>
            <person name="Nelson W.C."/>
            <person name="Tallon L.J."/>
            <person name="Jones K.M."/>
            <person name="Ulrich L.E."/>
            <person name="Gonzalez J.M."/>
            <person name="Zhulin I.B."/>
            <person name="Robb F.T."/>
            <person name="Eisen J.A."/>
        </authorList>
    </citation>
    <scope>NUCLEOTIDE SEQUENCE [LARGE SCALE GENOMIC DNA]</scope>
    <source>
        <strain>ATCC BAA-161 / DSM 6008 / Z-2901</strain>
    </source>
</reference>
<organism>
    <name type="scientific">Carboxydothermus hydrogenoformans (strain ATCC BAA-161 / DSM 6008 / Z-2901)</name>
    <dbReference type="NCBI Taxonomy" id="246194"/>
    <lineage>
        <taxon>Bacteria</taxon>
        <taxon>Bacillati</taxon>
        <taxon>Bacillota</taxon>
        <taxon>Clostridia</taxon>
        <taxon>Thermoanaerobacterales</taxon>
        <taxon>Thermoanaerobacteraceae</taxon>
        <taxon>Carboxydothermus</taxon>
    </lineage>
</organism>
<comment type="catalytic activity">
    <reaction evidence="1">
        <text>1-(5-phospho-beta-D-ribosyl)-5-[(5-phospho-beta-D-ribosylamino)methylideneamino]imidazole-4-carboxamide = 5-[(5-phospho-1-deoxy-D-ribulos-1-ylimino)methylamino]-1-(5-phospho-beta-D-ribosyl)imidazole-4-carboxamide</text>
        <dbReference type="Rhea" id="RHEA:15469"/>
        <dbReference type="ChEBI" id="CHEBI:58435"/>
        <dbReference type="ChEBI" id="CHEBI:58525"/>
        <dbReference type="EC" id="5.3.1.16"/>
    </reaction>
</comment>
<comment type="pathway">
    <text evidence="1">Amino-acid biosynthesis; L-histidine biosynthesis; L-histidine from 5-phospho-alpha-D-ribose 1-diphosphate: step 4/9.</text>
</comment>
<comment type="subcellular location">
    <subcellularLocation>
        <location evidence="1">Cytoplasm</location>
    </subcellularLocation>
</comment>
<comment type="similarity">
    <text evidence="1">Belongs to the HisA/HisF family.</text>
</comment>
<name>HIS4_CARHZ</name>
<sequence>MILIPAIDLMGKKVVRLTQGEKERKTEYPISPVELALKYQEAGARLIHVVDLDRAFTGESENFEVIAEIIKNVSIPVQVGGGIRDIESFRELIDLGVSRVIVGTIAVTNPELLEEMLTLDRDKVAVGIDAKNGWVAIKGWVESSNYRALDLAYKVKEMGVTTIIYTDIARDGSLTGPNFNETLKLAIDTGLKVIASGGISGLEDLRRWRELGENKIYGVIAGKAILEGKIDLKEGIRILEGES</sequence>
<proteinExistence type="inferred from homology"/>
<feature type="chain" id="PRO_0000229049" description="1-(5-phosphoribosyl)-5-[(5-phosphoribosylamino)methylideneamino] imidazole-4-carboxamide isomerase">
    <location>
        <begin position="1"/>
        <end position="243"/>
    </location>
</feature>
<feature type="active site" description="Proton acceptor" evidence="1">
    <location>
        <position position="8"/>
    </location>
</feature>
<feature type="active site" description="Proton donor" evidence="1">
    <location>
        <position position="129"/>
    </location>
</feature>